<dbReference type="EC" id="2.3.1.-" evidence="1"/>
<dbReference type="EMBL" id="AP009493">
    <property type="protein sequence ID" value="BAG20805.1"/>
    <property type="molecule type" value="Genomic_DNA"/>
</dbReference>
<dbReference type="RefSeq" id="WP_012380280.1">
    <property type="nucleotide sequence ID" value="NC_010572.1"/>
</dbReference>
<dbReference type="SMR" id="B1VS51"/>
<dbReference type="KEGG" id="sgr:SGR_3976"/>
<dbReference type="eggNOG" id="COG4552">
    <property type="taxonomic scope" value="Bacteria"/>
</dbReference>
<dbReference type="HOGENOM" id="CLU_050659_0_0_11"/>
<dbReference type="Proteomes" id="UP000001685">
    <property type="component" value="Chromosome"/>
</dbReference>
<dbReference type="GO" id="GO:0034069">
    <property type="term" value="F:aminoglycoside N-acetyltransferase activity"/>
    <property type="evidence" value="ECO:0007669"/>
    <property type="project" value="TreeGrafter"/>
</dbReference>
<dbReference type="GO" id="GO:0030649">
    <property type="term" value="P:aminoglycoside antibiotic catabolic process"/>
    <property type="evidence" value="ECO:0007669"/>
    <property type="project" value="TreeGrafter"/>
</dbReference>
<dbReference type="Gene3D" id="3.40.630.30">
    <property type="match status" value="2"/>
</dbReference>
<dbReference type="Gene3D" id="3.30.1050.10">
    <property type="entry name" value="SCP2 sterol-binding domain"/>
    <property type="match status" value="1"/>
</dbReference>
<dbReference type="HAMAP" id="MF_01812">
    <property type="entry name" value="Eis"/>
    <property type="match status" value="1"/>
</dbReference>
<dbReference type="InterPro" id="IPR041380">
    <property type="entry name" value="Acetyltransf_17"/>
</dbReference>
<dbReference type="InterPro" id="IPR051554">
    <property type="entry name" value="Acetyltransferase_Eis"/>
</dbReference>
<dbReference type="InterPro" id="IPR016181">
    <property type="entry name" value="Acyl_CoA_acyltransferase"/>
</dbReference>
<dbReference type="InterPro" id="IPR025559">
    <property type="entry name" value="Eis_dom"/>
</dbReference>
<dbReference type="InterPro" id="IPR000182">
    <property type="entry name" value="GNAT_dom"/>
</dbReference>
<dbReference type="InterPro" id="IPR022902">
    <property type="entry name" value="NAcTrfase_Eis"/>
</dbReference>
<dbReference type="InterPro" id="IPR036527">
    <property type="entry name" value="SCP2_sterol-bd_dom_sf"/>
</dbReference>
<dbReference type="NCBIfam" id="NF002367">
    <property type="entry name" value="PRK01346.1-4"/>
    <property type="match status" value="1"/>
</dbReference>
<dbReference type="PANTHER" id="PTHR37817">
    <property type="entry name" value="N-ACETYLTRANSFERASE EIS"/>
    <property type="match status" value="1"/>
</dbReference>
<dbReference type="PANTHER" id="PTHR37817:SF1">
    <property type="entry name" value="N-ACETYLTRANSFERASE EIS"/>
    <property type="match status" value="1"/>
</dbReference>
<dbReference type="Pfam" id="PF17668">
    <property type="entry name" value="Acetyltransf_17"/>
    <property type="match status" value="1"/>
</dbReference>
<dbReference type="Pfam" id="PF13527">
    <property type="entry name" value="Acetyltransf_9"/>
    <property type="match status" value="1"/>
</dbReference>
<dbReference type="Pfam" id="PF13530">
    <property type="entry name" value="SCP2_2"/>
    <property type="match status" value="1"/>
</dbReference>
<dbReference type="SUPFAM" id="SSF55729">
    <property type="entry name" value="Acyl-CoA N-acyltransferases (Nat)"/>
    <property type="match status" value="1"/>
</dbReference>
<dbReference type="SUPFAM" id="SSF55718">
    <property type="entry name" value="SCP-like"/>
    <property type="match status" value="1"/>
</dbReference>
<dbReference type="PROSITE" id="PS51186">
    <property type="entry name" value="GNAT"/>
    <property type="match status" value="1"/>
</dbReference>
<reference key="1">
    <citation type="journal article" date="2008" name="J. Bacteriol.">
        <title>Genome sequence of the streptomycin-producing microorganism Streptomyces griseus IFO 13350.</title>
        <authorList>
            <person name="Ohnishi Y."/>
            <person name="Ishikawa J."/>
            <person name="Hara H."/>
            <person name="Suzuki H."/>
            <person name="Ikenoya M."/>
            <person name="Ikeda H."/>
            <person name="Yamashita A."/>
            <person name="Hattori M."/>
            <person name="Horinouchi S."/>
        </authorList>
    </citation>
    <scope>NUCLEOTIDE SEQUENCE [LARGE SCALE GENOMIC DNA]</scope>
    <source>
        <strain>JCM 4626 / CBS 651.72 / NBRC 13350 / KCC S-0626 / ISP 5235</strain>
    </source>
</reference>
<proteinExistence type="inferred from homology"/>
<comment type="subunit">
    <text evidence="1">Homohexamer; trimer of dimers.</text>
</comment>
<comment type="similarity">
    <text>Belongs to the acetyltransferase Eis family.</text>
</comment>
<accession>B1VS51</accession>
<sequence length="416" mass="44975">MSLDVRTITPSESAEWMRAVSTGFLTAGTPSEELVADRFAGADLSRTQGAFEAGRCVATFRSFAQELTVVGGATVAADAISGVTVTPTHRRRGLLSRMMATDLAAAKERGEPVASLIAAEYPIYGRYGFGPAAWTSVWEVSVYRAGLDARRSGQPADGGRIEMVDGADVRKLGPEVHGALAARQPGVVTRDERWWRQRTGAAPSSAHEKWTEPFYVVHRAADGTVDGLMTYGTDDTWGDAKQPLNTASVRDMIALNPAAERALWHYLCSIDWITTIRSGYRAPDDLLPLLLPDPRAARMITNADWLWLRMLDVPRALEARTYGTEASLVLEVRDDAGLAGGRFLLDASTGGARCVSTTRSADLVLGVAELATLYLGDESVRRLVDLGRAEESRAGAATTADAVFRTGRRPWCPDVF</sequence>
<name>Y3976_STRGG</name>
<evidence type="ECO:0000255" key="1">
    <source>
        <dbReference type="HAMAP-Rule" id="MF_01812"/>
    </source>
</evidence>
<feature type="chain" id="PRO_1000187721" description="Uncharacterized N-acetyltransferase SGR_3976">
    <location>
        <begin position="1"/>
        <end position="416"/>
    </location>
</feature>
<feature type="domain" description="N-acetyltransferase" evidence="1">
    <location>
        <begin position="3"/>
        <end position="150"/>
    </location>
</feature>
<feature type="active site" description="Proton donor" evidence="1">
    <location>
        <position position="124"/>
    </location>
</feature>
<feature type="active site" description="Proton acceptor; via carboxylate" evidence="1">
    <location>
        <position position="416"/>
    </location>
</feature>
<feature type="binding site" evidence="1">
    <location>
        <begin position="83"/>
        <end position="85"/>
    </location>
    <ligand>
        <name>acetyl-CoA</name>
        <dbReference type="ChEBI" id="CHEBI:57288"/>
    </ligand>
</feature>
<feature type="binding site" evidence="1">
    <location>
        <begin position="91"/>
        <end position="96"/>
    </location>
    <ligand>
        <name>acetyl-CoA</name>
        <dbReference type="ChEBI" id="CHEBI:57288"/>
    </ligand>
</feature>
<protein>
    <recommendedName>
        <fullName evidence="1">Uncharacterized N-acetyltransferase SGR_3976</fullName>
        <ecNumber evidence="1">2.3.1.-</ecNumber>
    </recommendedName>
</protein>
<organism>
    <name type="scientific">Streptomyces griseus subsp. griseus (strain JCM 4626 / CBS 651.72 / NBRC 13350 / KCC S-0626 / ISP 5235)</name>
    <dbReference type="NCBI Taxonomy" id="455632"/>
    <lineage>
        <taxon>Bacteria</taxon>
        <taxon>Bacillati</taxon>
        <taxon>Actinomycetota</taxon>
        <taxon>Actinomycetes</taxon>
        <taxon>Kitasatosporales</taxon>
        <taxon>Streptomycetaceae</taxon>
        <taxon>Streptomyces</taxon>
    </lineage>
</organism>
<gene>
    <name type="ordered locus">SGR_3976</name>
</gene>
<keyword id="KW-0012">Acyltransferase</keyword>
<keyword id="KW-0808">Transferase</keyword>